<reference key="1">
    <citation type="journal article" date="2008" name="J. Bacteriol.">
        <title>The complete genome sequence of Escherichia coli DH10B: insights into the biology of a laboratory workhorse.</title>
        <authorList>
            <person name="Durfee T."/>
            <person name="Nelson R."/>
            <person name="Baldwin S."/>
            <person name="Plunkett G. III"/>
            <person name="Burland V."/>
            <person name="Mau B."/>
            <person name="Petrosino J.F."/>
            <person name="Qin X."/>
            <person name="Muzny D.M."/>
            <person name="Ayele M."/>
            <person name="Gibbs R.A."/>
            <person name="Csorgo B."/>
            <person name="Posfai G."/>
            <person name="Weinstock G.M."/>
            <person name="Blattner F.R."/>
        </authorList>
    </citation>
    <scope>NUCLEOTIDE SEQUENCE [LARGE SCALE GENOMIC DNA]</scope>
    <source>
        <strain>K12 / DH10B</strain>
    </source>
</reference>
<gene>
    <name evidence="1" type="primary">aceK</name>
    <name type="ordered locus">ECDH10B_4205</name>
</gene>
<sequence>MPRGLELLIAQTILQGFDAQYGRFLEVTSGAQQRFEQADWHAVQQAMKNRIHLYDHHVGLVVEQLRCITNGQSTDAAFLLRVKEHYTRLLPDYPRFEIAESFFNSVYCRLFDHRSLTPERLFIFSSQPERRFRTIPRPLAKDFHPDHGWESLLMRVISDLPLRLRWQNKSRDIHYIIRHLTETLGTDNLAESHLQVANELFYRNKAAWLVGKLITPSGTLPFLLPIHQTDDGELFIDTCLTTTAEASIVFGFARSYFMVYAPLPAALVEWLREILPGKTTAELYMAIGCQKHAKTESYREYLVYLQGCNEQFIEAPGIRGMVMLVFTLPGFDRVFKVIKDRFAPQKEMSAAHVRACYQLVKEHDRVGRMADTQEFENFVLEKRHISPALMELLLQEAAEKITDLGEQIVIRHLYIERRMVPLNIWLEQVEGQQLRDAIEEYGNAIRQLAAANIFPGDMLFKNFGVTRHGRVVFYDYDEICYMTEVNFRDIPPPRYPEDELASEPWYSVSPGDVFPEEFRHWLCADPRIGPLFEEMHADLFRADYWRALQNRIREGHVEDVYAYRRRQRFSVRYGEMLF</sequence>
<keyword id="KW-0067">ATP-binding</keyword>
<keyword id="KW-0963">Cytoplasm</keyword>
<keyword id="KW-0329">Glyoxylate bypass</keyword>
<keyword id="KW-0378">Hydrolase</keyword>
<keyword id="KW-0418">Kinase</keyword>
<keyword id="KW-0547">Nucleotide-binding</keyword>
<keyword id="KW-0904">Protein phosphatase</keyword>
<keyword id="KW-0723">Serine/threonine-protein kinase</keyword>
<keyword id="KW-0808">Transferase</keyword>
<keyword id="KW-0816">Tricarboxylic acid cycle</keyword>
<evidence type="ECO:0000255" key="1">
    <source>
        <dbReference type="HAMAP-Rule" id="MF_00747"/>
    </source>
</evidence>
<comment type="function">
    <text evidence="1">Bifunctional enzyme which can phosphorylate or dephosphorylate isocitrate dehydrogenase (IDH) on a specific serine residue. This is a regulatory mechanism which enables bacteria to bypass the Krebs cycle via the glyoxylate shunt in response to the source of carbon. When bacteria are grown on glucose, IDH is fully active and unphosphorylated, but when grown on acetate or ethanol, the activity of IDH declines drastically concomitant with its phosphorylation.</text>
</comment>
<comment type="catalytic activity">
    <reaction evidence="1">
        <text>L-seryl-[isocitrate dehydrogenase] + ATP = O-phospho-L-seryl-[isocitrate dehydrogenase] + ADP + H(+)</text>
        <dbReference type="Rhea" id="RHEA:43540"/>
        <dbReference type="Rhea" id="RHEA-COMP:10605"/>
        <dbReference type="Rhea" id="RHEA-COMP:10606"/>
        <dbReference type="ChEBI" id="CHEBI:15378"/>
        <dbReference type="ChEBI" id="CHEBI:29999"/>
        <dbReference type="ChEBI" id="CHEBI:30616"/>
        <dbReference type="ChEBI" id="CHEBI:83421"/>
        <dbReference type="ChEBI" id="CHEBI:456216"/>
        <dbReference type="EC" id="2.7.11.5"/>
    </reaction>
</comment>
<comment type="subcellular location">
    <subcellularLocation>
        <location evidence="1">Cytoplasm</location>
    </subcellularLocation>
</comment>
<comment type="similarity">
    <text evidence="1">Belongs to the AceK family.</text>
</comment>
<feature type="chain" id="PRO_1000133267" description="Isocitrate dehydrogenase kinase/phosphatase">
    <location>
        <begin position="1"/>
        <end position="578"/>
    </location>
</feature>
<feature type="active site" evidence="1">
    <location>
        <position position="371"/>
    </location>
</feature>
<feature type="binding site" evidence="1">
    <location>
        <begin position="315"/>
        <end position="321"/>
    </location>
    <ligand>
        <name>ATP</name>
        <dbReference type="ChEBI" id="CHEBI:30616"/>
    </ligand>
</feature>
<feature type="binding site" evidence="1">
    <location>
        <position position="336"/>
    </location>
    <ligand>
        <name>ATP</name>
        <dbReference type="ChEBI" id="CHEBI:30616"/>
    </ligand>
</feature>
<proteinExistence type="inferred from homology"/>
<protein>
    <recommendedName>
        <fullName evidence="1">Isocitrate dehydrogenase kinase/phosphatase</fullName>
        <shortName evidence="1">IDH kinase/phosphatase</shortName>
        <shortName evidence="1">IDHK/P</shortName>
        <ecNumber evidence="1">2.7.11.5</ecNumber>
        <ecNumber evidence="1">3.1.3.-</ecNumber>
    </recommendedName>
</protein>
<accession>B1XC15</accession>
<name>ACEK_ECODH</name>
<dbReference type="EC" id="2.7.11.5" evidence="1"/>
<dbReference type="EC" id="3.1.3.-" evidence="1"/>
<dbReference type="EMBL" id="CP000948">
    <property type="protein sequence ID" value="ACB05015.1"/>
    <property type="molecule type" value="Genomic_DNA"/>
</dbReference>
<dbReference type="RefSeq" id="WP_001137220.1">
    <property type="nucleotide sequence ID" value="NC_010473.1"/>
</dbReference>
<dbReference type="SMR" id="B1XC15"/>
<dbReference type="KEGG" id="ecd:ECDH10B_4205"/>
<dbReference type="HOGENOM" id="CLU_033804_1_1_6"/>
<dbReference type="GO" id="GO:0005737">
    <property type="term" value="C:cytoplasm"/>
    <property type="evidence" value="ECO:0007669"/>
    <property type="project" value="UniProtKB-SubCell"/>
</dbReference>
<dbReference type="GO" id="GO:0008772">
    <property type="term" value="F:[isocitrate dehydrogenase (NADP+)] kinase activity"/>
    <property type="evidence" value="ECO:0007669"/>
    <property type="project" value="UniProtKB-UniRule"/>
</dbReference>
<dbReference type="GO" id="GO:0016208">
    <property type="term" value="F:AMP binding"/>
    <property type="evidence" value="ECO:0007669"/>
    <property type="project" value="TreeGrafter"/>
</dbReference>
<dbReference type="GO" id="GO:0005524">
    <property type="term" value="F:ATP binding"/>
    <property type="evidence" value="ECO:0007669"/>
    <property type="project" value="UniProtKB-UniRule"/>
</dbReference>
<dbReference type="GO" id="GO:0004721">
    <property type="term" value="F:phosphoprotein phosphatase activity"/>
    <property type="evidence" value="ECO:0007669"/>
    <property type="project" value="UniProtKB-KW"/>
</dbReference>
<dbReference type="GO" id="GO:0004674">
    <property type="term" value="F:protein serine/threonine kinase activity"/>
    <property type="evidence" value="ECO:0007669"/>
    <property type="project" value="UniProtKB-KW"/>
</dbReference>
<dbReference type="GO" id="GO:0006006">
    <property type="term" value="P:glucose metabolic process"/>
    <property type="evidence" value="ECO:0007669"/>
    <property type="project" value="InterPro"/>
</dbReference>
<dbReference type="GO" id="GO:0006097">
    <property type="term" value="P:glyoxylate cycle"/>
    <property type="evidence" value="ECO:0007669"/>
    <property type="project" value="UniProtKB-UniRule"/>
</dbReference>
<dbReference type="GO" id="GO:0006099">
    <property type="term" value="P:tricarboxylic acid cycle"/>
    <property type="evidence" value="ECO:0007669"/>
    <property type="project" value="UniProtKB-UniRule"/>
</dbReference>
<dbReference type="HAMAP" id="MF_00747">
    <property type="entry name" value="AceK"/>
    <property type="match status" value="1"/>
</dbReference>
<dbReference type="InterPro" id="IPR046855">
    <property type="entry name" value="AceK_kinase"/>
</dbReference>
<dbReference type="InterPro" id="IPR046854">
    <property type="entry name" value="AceK_regulatory"/>
</dbReference>
<dbReference type="InterPro" id="IPR010452">
    <property type="entry name" value="Isocitrate_DH_AceK"/>
</dbReference>
<dbReference type="NCBIfam" id="NF002804">
    <property type="entry name" value="PRK02946.1"/>
    <property type="match status" value="1"/>
</dbReference>
<dbReference type="PANTHER" id="PTHR39559">
    <property type="match status" value="1"/>
</dbReference>
<dbReference type="PANTHER" id="PTHR39559:SF1">
    <property type="entry name" value="ISOCITRATE DEHYDROGENASE KINASE_PHOSPHATASE"/>
    <property type="match status" value="1"/>
</dbReference>
<dbReference type="Pfam" id="PF06315">
    <property type="entry name" value="AceK_kinase"/>
    <property type="match status" value="1"/>
</dbReference>
<dbReference type="Pfam" id="PF20423">
    <property type="entry name" value="AceK_regulatory"/>
    <property type="match status" value="1"/>
</dbReference>
<dbReference type="PIRSF" id="PIRSF000719">
    <property type="entry name" value="AceK"/>
    <property type="match status" value="1"/>
</dbReference>
<organism>
    <name type="scientific">Escherichia coli (strain K12 / DH10B)</name>
    <dbReference type="NCBI Taxonomy" id="316385"/>
    <lineage>
        <taxon>Bacteria</taxon>
        <taxon>Pseudomonadati</taxon>
        <taxon>Pseudomonadota</taxon>
        <taxon>Gammaproteobacteria</taxon>
        <taxon>Enterobacterales</taxon>
        <taxon>Enterobacteriaceae</taxon>
        <taxon>Escherichia</taxon>
    </lineage>
</organism>